<name>HSLU_SACD2</name>
<organism>
    <name type="scientific">Saccharophagus degradans (strain 2-40 / ATCC 43961 / DSM 17024)</name>
    <dbReference type="NCBI Taxonomy" id="203122"/>
    <lineage>
        <taxon>Bacteria</taxon>
        <taxon>Pseudomonadati</taxon>
        <taxon>Pseudomonadota</taxon>
        <taxon>Gammaproteobacteria</taxon>
        <taxon>Cellvibrionales</taxon>
        <taxon>Cellvibrionaceae</taxon>
        <taxon>Saccharophagus</taxon>
    </lineage>
</organism>
<proteinExistence type="inferred from homology"/>
<protein>
    <recommendedName>
        <fullName evidence="1">ATP-dependent protease ATPase subunit HslU</fullName>
    </recommendedName>
    <alternativeName>
        <fullName evidence="1">Unfoldase HslU</fullName>
    </alternativeName>
</protein>
<comment type="function">
    <text evidence="1">ATPase subunit of a proteasome-like degradation complex; this subunit has chaperone activity. The binding of ATP and its subsequent hydrolysis by HslU are essential for unfolding of protein substrates subsequently hydrolyzed by HslV. HslU recognizes the N-terminal part of its protein substrates and unfolds these before they are guided to HslV for hydrolysis.</text>
</comment>
<comment type="subunit">
    <text evidence="1">A double ring-shaped homohexamer of HslV is capped on each side by a ring-shaped HslU homohexamer. The assembly of the HslU/HslV complex is dependent on binding of ATP.</text>
</comment>
<comment type="subcellular location">
    <subcellularLocation>
        <location evidence="1">Cytoplasm</location>
    </subcellularLocation>
</comment>
<comment type="similarity">
    <text evidence="1">Belongs to the ClpX chaperone family. HslU subfamily.</text>
</comment>
<sequence>MSTMTPREIVHELDQHIVGQQDAKKAVAIALRNRWRRMQLDAKLRTEITPKNILMIGPTGVGKTEIARRLAKLTNAPFIKVEATKFTEVGYVGRDVESIIRDLVDSSIKMMREQEMTKVRHRAEEAAEERILNALLPPARGEDGAVEDSSTRQIFRKKLREGQLDDKEIEIDVSATPVGVEIMAPPGMEDMTSQLQNMFSSMNTGKTKKTKLTVKKAFKKLTDEEAAKLVNEEELKAQAIDAAEQNGIVFIDEIDKVAKREGNSGADVSREGVQRDLLPLIEGCTVSTKHGMIKTDHILFITSGAFHVSKPSDLIPELQGRLPIRVELQALTPDDFERILTEPTASLTEQHQSLLATEGTQIEFTADGIRKIAEIAYQVNKSTENIGARRLHTVLEKLLEEISFAAGESDNNVTIDAAFVDGQLGELTKNEDLSRFIL</sequence>
<gene>
    <name evidence="1" type="primary">hslU</name>
    <name type="ordered locus">Sde_2698</name>
</gene>
<feature type="chain" id="PRO_1000119112" description="ATP-dependent protease ATPase subunit HslU">
    <location>
        <begin position="1"/>
        <end position="438"/>
    </location>
</feature>
<feature type="binding site" evidence="1">
    <location>
        <position position="18"/>
    </location>
    <ligand>
        <name>ATP</name>
        <dbReference type="ChEBI" id="CHEBI:30616"/>
    </ligand>
</feature>
<feature type="binding site" evidence="1">
    <location>
        <begin position="60"/>
        <end position="65"/>
    </location>
    <ligand>
        <name>ATP</name>
        <dbReference type="ChEBI" id="CHEBI:30616"/>
    </ligand>
</feature>
<feature type="binding site" evidence="1">
    <location>
        <position position="252"/>
    </location>
    <ligand>
        <name>ATP</name>
        <dbReference type="ChEBI" id="CHEBI:30616"/>
    </ligand>
</feature>
<feature type="binding site" evidence="1">
    <location>
        <position position="317"/>
    </location>
    <ligand>
        <name>ATP</name>
        <dbReference type="ChEBI" id="CHEBI:30616"/>
    </ligand>
</feature>
<feature type="binding site" evidence="1">
    <location>
        <position position="389"/>
    </location>
    <ligand>
        <name>ATP</name>
        <dbReference type="ChEBI" id="CHEBI:30616"/>
    </ligand>
</feature>
<keyword id="KW-0067">ATP-binding</keyword>
<keyword id="KW-0143">Chaperone</keyword>
<keyword id="KW-0963">Cytoplasm</keyword>
<keyword id="KW-0547">Nucleotide-binding</keyword>
<keyword id="KW-1185">Reference proteome</keyword>
<keyword id="KW-0346">Stress response</keyword>
<dbReference type="EMBL" id="CP000282">
    <property type="protein sequence ID" value="ABD81958.1"/>
    <property type="molecule type" value="Genomic_DNA"/>
</dbReference>
<dbReference type="RefSeq" id="WP_011469175.1">
    <property type="nucleotide sequence ID" value="NC_007912.1"/>
</dbReference>
<dbReference type="SMR" id="Q21H71"/>
<dbReference type="STRING" id="203122.Sde_2698"/>
<dbReference type="GeneID" id="98614356"/>
<dbReference type="KEGG" id="sde:Sde_2698"/>
<dbReference type="eggNOG" id="COG1220">
    <property type="taxonomic scope" value="Bacteria"/>
</dbReference>
<dbReference type="HOGENOM" id="CLU_033123_0_0_6"/>
<dbReference type="OrthoDB" id="9804062at2"/>
<dbReference type="Proteomes" id="UP000001947">
    <property type="component" value="Chromosome"/>
</dbReference>
<dbReference type="GO" id="GO:0009376">
    <property type="term" value="C:HslUV protease complex"/>
    <property type="evidence" value="ECO:0007669"/>
    <property type="project" value="UniProtKB-UniRule"/>
</dbReference>
<dbReference type="GO" id="GO:0005524">
    <property type="term" value="F:ATP binding"/>
    <property type="evidence" value="ECO:0007669"/>
    <property type="project" value="UniProtKB-UniRule"/>
</dbReference>
<dbReference type="GO" id="GO:0016887">
    <property type="term" value="F:ATP hydrolysis activity"/>
    <property type="evidence" value="ECO:0007669"/>
    <property type="project" value="InterPro"/>
</dbReference>
<dbReference type="GO" id="GO:0008233">
    <property type="term" value="F:peptidase activity"/>
    <property type="evidence" value="ECO:0007669"/>
    <property type="project" value="InterPro"/>
</dbReference>
<dbReference type="GO" id="GO:0036402">
    <property type="term" value="F:proteasome-activating activity"/>
    <property type="evidence" value="ECO:0007669"/>
    <property type="project" value="UniProtKB-UniRule"/>
</dbReference>
<dbReference type="GO" id="GO:0043335">
    <property type="term" value="P:protein unfolding"/>
    <property type="evidence" value="ECO:0007669"/>
    <property type="project" value="UniProtKB-UniRule"/>
</dbReference>
<dbReference type="GO" id="GO:0051603">
    <property type="term" value="P:proteolysis involved in protein catabolic process"/>
    <property type="evidence" value="ECO:0007669"/>
    <property type="project" value="TreeGrafter"/>
</dbReference>
<dbReference type="CDD" id="cd19498">
    <property type="entry name" value="RecA-like_HslU"/>
    <property type="match status" value="1"/>
</dbReference>
<dbReference type="FunFam" id="1.10.8.10:FF:000028">
    <property type="entry name" value="ATP-dependent protease ATPase subunit HslU"/>
    <property type="match status" value="1"/>
</dbReference>
<dbReference type="FunFam" id="3.40.50.300:FF:000213">
    <property type="entry name" value="ATP-dependent protease ATPase subunit HslU"/>
    <property type="match status" value="1"/>
</dbReference>
<dbReference type="FunFam" id="3.40.50.300:FF:000220">
    <property type="entry name" value="ATP-dependent protease ATPase subunit HslU"/>
    <property type="match status" value="1"/>
</dbReference>
<dbReference type="Gene3D" id="1.10.8.60">
    <property type="match status" value="1"/>
</dbReference>
<dbReference type="Gene3D" id="1.10.8.10">
    <property type="entry name" value="DNA helicase RuvA subunit, C-terminal domain"/>
    <property type="match status" value="2"/>
</dbReference>
<dbReference type="Gene3D" id="3.40.50.300">
    <property type="entry name" value="P-loop containing nucleotide triphosphate hydrolases"/>
    <property type="match status" value="1"/>
</dbReference>
<dbReference type="HAMAP" id="MF_00249">
    <property type="entry name" value="HslU"/>
    <property type="match status" value="1"/>
</dbReference>
<dbReference type="InterPro" id="IPR003593">
    <property type="entry name" value="AAA+_ATPase"/>
</dbReference>
<dbReference type="InterPro" id="IPR050052">
    <property type="entry name" value="ATP-dep_Clp_protease_ClpX"/>
</dbReference>
<dbReference type="InterPro" id="IPR003959">
    <property type="entry name" value="ATPase_AAA_core"/>
</dbReference>
<dbReference type="InterPro" id="IPR019489">
    <property type="entry name" value="Clp_ATPase_C"/>
</dbReference>
<dbReference type="InterPro" id="IPR004491">
    <property type="entry name" value="HslU"/>
</dbReference>
<dbReference type="InterPro" id="IPR027417">
    <property type="entry name" value="P-loop_NTPase"/>
</dbReference>
<dbReference type="NCBIfam" id="TIGR00390">
    <property type="entry name" value="hslU"/>
    <property type="match status" value="1"/>
</dbReference>
<dbReference type="NCBIfam" id="NF003544">
    <property type="entry name" value="PRK05201.1"/>
    <property type="match status" value="1"/>
</dbReference>
<dbReference type="PANTHER" id="PTHR48102">
    <property type="entry name" value="ATP-DEPENDENT CLP PROTEASE ATP-BINDING SUBUNIT CLPX-LIKE, MITOCHONDRIAL-RELATED"/>
    <property type="match status" value="1"/>
</dbReference>
<dbReference type="PANTHER" id="PTHR48102:SF3">
    <property type="entry name" value="ATP-DEPENDENT PROTEASE ATPASE SUBUNIT HSLU"/>
    <property type="match status" value="1"/>
</dbReference>
<dbReference type="Pfam" id="PF00004">
    <property type="entry name" value="AAA"/>
    <property type="match status" value="1"/>
</dbReference>
<dbReference type="Pfam" id="PF07724">
    <property type="entry name" value="AAA_2"/>
    <property type="match status" value="1"/>
</dbReference>
<dbReference type="SMART" id="SM00382">
    <property type="entry name" value="AAA"/>
    <property type="match status" value="1"/>
</dbReference>
<dbReference type="SMART" id="SM01086">
    <property type="entry name" value="ClpB_D2-small"/>
    <property type="match status" value="1"/>
</dbReference>
<dbReference type="SUPFAM" id="SSF52540">
    <property type="entry name" value="P-loop containing nucleoside triphosphate hydrolases"/>
    <property type="match status" value="1"/>
</dbReference>
<evidence type="ECO:0000255" key="1">
    <source>
        <dbReference type="HAMAP-Rule" id="MF_00249"/>
    </source>
</evidence>
<reference key="1">
    <citation type="journal article" date="2008" name="PLoS Genet.">
        <title>Complete genome sequence of the complex carbohydrate-degrading marine bacterium, Saccharophagus degradans strain 2-40 T.</title>
        <authorList>
            <person name="Weiner R.M."/>
            <person name="Taylor L.E. II"/>
            <person name="Henrissat B."/>
            <person name="Hauser L."/>
            <person name="Land M."/>
            <person name="Coutinho P.M."/>
            <person name="Rancurel C."/>
            <person name="Saunders E.H."/>
            <person name="Longmire A.G."/>
            <person name="Zhang H."/>
            <person name="Bayer E.A."/>
            <person name="Gilbert H.J."/>
            <person name="Larimer F."/>
            <person name="Zhulin I.B."/>
            <person name="Ekborg N.A."/>
            <person name="Lamed R."/>
            <person name="Richardson P.M."/>
            <person name="Borovok I."/>
            <person name="Hutcheson S."/>
        </authorList>
    </citation>
    <scope>NUCLEOTIDE SEQUENCE [LARGE SCALE GENOMIC DNA]</scope>
    <source>
        <strain>2-40 / ATCC 43961 / DSM 17024</strain>
    </source>
</reference>
<accession>Q21H71</accession>